<proteinExistence type="predicted"/>
<protein>
    <recommendedName>
        <fullName>SPX domain-containing protein 3</fullName>
    </recommendedName>
    <alternativeName>
        <fullName>Protein SPX DOMAIN GENE 3</fullName>
        <shortName>OsSPX3</shortName>
    </alternativeName>
</protein>
<keyword id="KW-1185">Reference proteome</keyword>
<sequence>MKFGKRLKKQVEESLPEWRDKFLAYKRLKKLVRLVSSSSGDVGGGGGGEAEFVRLLDGEVDRINAFFLEQEEEFVIRQRELQETVEKVAGGGGGGRRPAAAEMRRVRKEIVDLHGEMVLLLNYSAVNYTGLAKILKKYDKRTGRLLRLPFIEKVLRQPFFTTELISRLVRDCEATMEAIFTSSVATTAMAGDRRTWKGCSGDAGMAPMADQQGIFRNTVAALATMKELRSGSSTYGRFSLPPMAAPASPESDVLQSIRSDPHLKENGRIPSLQFFYA</sequence>
<accession>A2Z6W1</accession>
<dbReference type="EMBL" id="CM000135">
    <property type="protein sequence ID" value="EAY78345.1"/>
    <property type="molecule type" value="Genomic_DNA"/>
</dbReference>
<dbReference type="SMR" id="A2Z6W1"/>
<dbReference type="STRING" id="39946.A2Z6W1"/>
<dbReference type="EnsemblPlants" id="BGIOSGA032852-TA">
    <property type="protein sequence ID" value="BGIOSGA032852-PA"/>
    <property type="gene ID" value="BGIOSGA032852"/>
</dbReference>
<dbReference type="EnsemblPlants" id="OsGoSa_10g0009650.01">
    <property type="protein sequence ID" value="OsGoSa_10g0009650.01"/>
    <property type="gene ID" value="OsGoSa_10g0009650"/>
</dbReference>
<dbReference type="EnsemblPlants" id="OsIR64_10g0009480.01">
    <property type="protein sequence ID" value="OsIR64_10g0009480.01"/>
    <property type="gene ID" value="OsIR64_10g0009480"/>
</dbReference>
<dbReference type="EnsemblPlants" id="OsKYG_10g0009230.01">
    <property type="protein sequence ID" value="OsKYG_10g0009230.01"/>
    <property type="gene ID" value="OsKYG_10g0009230"/>
</dbReference>
<dbReference type="EnsemblPlants" id="OsLaMu_10g0009750.01">
    <property type="protein sequence ID" value="OsLaMu_10g0009750.01"/>
    <property type="gene ID" value="OsLaMu_10g0009750"/>
</dbReference>
<dbReference type="EnsemblPlants" id="OsLima_10g0009270.01">
    <property type="protein sequence ID" value="OsLima_10g0009270.01"/>
    <property type="gene ID" value="OsLima_10g0009270"/>
</dbReference>
<dbReference type="EnsemblPlants" id="OsLiXu_10g0009260.01">
    <property type="protein sequence ID" value="OsLiXu_10g0009260.01"/>
    <property type="gene ID" value="OsLiXu_10g0009260"/>
</dbReference>
<dbReference type="EnsemblPlants" id="OsMH63_10G009340_01">
    <property type="protein sequence ID" value="OsMH63_10G009340_01"/>
    <property type="gene ID" value="OsMH63_10G009340"/>
</dbReference>
<dbReference type="EnsemblPlants" id="OsPr106_10g0009470.01">
    <property type="protein sequence ID" value="OsPr106_10g0009470.01"/>
    <property type="gene ID" value="OsPr106_10g0009470"/>
</dbReference>
<dbReference type="EnsemblPlants" id="OsZS97_10G009590_01">
    <property type="protein sequence ID" value="OsZS97_10G009590_01"/>
    <property type="gene ID" value="OsZS97_10G009590"/>
</dbReference>
<dbReference type="Gramene" id="BGIOSGA032852-TA">
    <property type="protein sequence ID" value="BGIOSGA032852-PA"/>
    <property type="gene ID" value="BGIOSGA032852"/>
</dbReference>
<dbReference type="Gramene" id="OsGoSa_10g0009650.01">
    <property type="protein sequence ID" value="OsGoSa_10g0009650.01"/>
    <property type="gene ID" value="OsGoSa_10g0009650"/>
</dbReference>
<dbReference type="Gramene" id="OsIR64_10g0009480.01">
    <property type="protein sequence ID" value="OsIR64_10g0009480.01"/>
    <property type="gene ID" value="OsIR64_10g0009480"/>
</dbReference>
<dbReference type="Gramene" id="OsKYG_10g0009230.01">
    <property type="protein sequence ID" value="OsKYG_10g0009230.01"/>
    <property type="gene ID" value="OsKYG_10g0009230"/>
</dbReference>
<dbReference type="Gramene" id="OsLaMu_10g0009750.01">
    <property type="protein sequence ID" value="OsLaMu_10g0009750.01"/>
    <property type="gene ID" value="OsLaMu_10g0009750"/>
</dbReference>
<dbReference type="Gramene" id="OsLima_10g0009270.01">
    <property type="protein sequence ID" value="OsLima_10g0009270.01"/>
    <property type="gene ID" value="OsLima_10g0009270"/>
</dbReference>
<dbReference type="Gramene" id="OsLiXu_10g0009260.01">
    <property type="protein sequence ID" value="OsLiXu_10g0009260.01"/>
    <property type="gene ID" value="OsLiXu_10g0009260"/>
</dbReference>
<dbReference type="Gramene" id="OsMH63_10G009340_01">
    <property type="protein sequence ID" value="OsMH63_10G009340_01"/>
    <property type="gene ID" value="OsMH63_10G009340"/>
</dbReference>
<dbReference type="Gramene" id="OsPr106_10g0009470.01">
    <property type="protein sequence ID" value="OsPr106_10g0009470.01"/>
    <property type="gene ID" value="OsPr106_10g0009470"/>
</dbReference>
<dbReference type="Gramene" id="OsZS97_10G009590_01">
    <property type="protein sequence ID" value="OsZS97_10G009590_01"/>
    <property type="gene ID" value="OsZS97_10G009590"/>
</dbReference>
<dbReference type="HOGENOM" id="CLU_057600_1_1_1"/>
<dbReference type="OMA" id="LAFVHFY"/>
<dbReference type="OrthoDB" id="6493944at2759"/>
<dbReference type="Proteomes" id="UP000007015">
    <property type="component" value="Chromosome 10"/>
</dbReference>
<dbReference type="GO" id="GO:0070417">
    <property type="term" value="P:cellular response to cold"/>
    <property type="evidence" value="ECO:0007669"/>
    <property type="project" value="EnsemblPlants"/>
</dbReference>
<dbReference type="GO" id="GO:0016036">
    <property type="term" value="P:cellular response to phosphate starvation"/>
    <property type="evidence" value="ECO:0007669"/>
    <property type="project" value="InterPro"/>
</dbReference>
<dbReference type="CDD" id="cd14481">
    <property type="entry name" value="SPX_AtSPX1_like"/>
    <property type="match status" value="1"/>
</dbReference>
<dbReference type="InterPro" id="IPR004331">
    <property type="entry name" value="SPX_dom"/>
</dbReference>
<dbReference type="InterPro" id="IPR031142">
    <property type="entry name" value="SPX_prot"/>
</dbReference>
<dbReference type="PANTHER" id="PTHR45978">
    <property type="entry name" value="SPX DOMAIN-CONTAINING PROTEIN 3"/>
    <property type="match status" value="1"/>
</dbReference>
<dbReference type="PANTHER" id="PTHR45978:SF2">
    <property type="entry name" value="SPX DOMAIN-CONTAINING PROTEIN 3"/>
    <property type="match status" value="1"/>
</dbReference>
<dbReference type="Pfam" id="PF03105">
    <property type="entry name" value="SPX"/>
    <property type="match status" value="2"/>
</dbReference>
<dbReference type="PROSITE" id="PS51382">
    <property type="entry name" value="SPX"/>
    <property type="match status" value="1"/>
</dbReference>
<gene>
    <name type="primary">SPX3</name>
    <name type="ORF">OsI_33433</name>
</gene>
<evidence type="ECO:0000255" key="1">
    <source>
        <dbReference type="PROSITE-ProRule" id="PRU00714"/>
    </source>
</evidence>
<reference key="1">
    <citation type="journal article" date="2005" name="PLoS Biol.">
        <title>The genomes of Oryza sativa: a history of duplications.</title>
        <authorList>
            <person name="Yu J."/>
            <person name="Wang J."/>
            <person name="Lin W."/>
            <person name="Li S."/>
            <person name="Li H."/>
            <person name="Zhou J."/>
            <person name="Ni P."/>
            <person name="Dong W."/>
            <person name="Hu S."/>
            <person name="Zeng C."/>
            <person name="Zhang J."/>
            <person name="Zhang Y."/>
            <person name="Li R."/>
            <person name="Xu Z."/>
            <person name="Li S."/>
            <person name="Li X."/>
            <person name="Zheng H."/>
            <person name="Cong L."/>
            <person name="Lin L."/>
            <person name="Yin J."/>
            <person name="Geng J."/>
            <person name="Li G."/>
            <person name="Shi J."/>
            <person name="Liu J."/>
            <person name="Lv H."/>
            <person name="Li J."/>
            <person name="Wang J."/>
            <person name="Deng Y."/>
            <person name="Ran L."/>
            <person name="Shi X."/>
            <person name="Wang X."/>
            <person name="Wu Q."/>
            <person name="Li C."/>
            <person name="Ren X."/>
            <person name="Wang J."/>
            <person name="Wang X."/>
            <person name="Li D."/>
            <person name="Liu D."/>
            <person name="Zhang X."/>
            <person name="Ji Z."/>
            <person name="Zhao W."/>
            <person name="Sun Y."/>
            <person name="Zhang Z."/>
            <person name="Bao J."/>
            <person name="Han Y."/>
            <person name="Dong L."/>
            <person name="Ji J."/>
            <person name="Chen P."/>
            <person name="Wu S."/>
            <person name="Liu J."/>
            <person name="Xiao Y."/>
            <person name="Bu D."/>
            <person name="Tan J."/>
            <person name="Yang L."/>
            <person name="Ye C."/>
            <person name="Zhang J."/>
            <person name="Xu J."/>
            <person name="Zhou Y."/>
            <person name="Yu Y."/>
            <person name="Zhang B."/>
            <person name="Zhuang S."/>
            <person name="Wei H."/>
            <person name="Liu B."/>
            <person name="Lei M."/>
            <person name="Yu H."/>
            <person name="Li Y."/>
            <person name="Xu H."/>
            <person name="Wei S."/>
            <person name="He X."/>
            <person name="Fang L."/>
            <person name="Zhang Z."/>
            <person name="Zhang Y."/>
            <person name="Huang X."/>
            <person name="Su Z."/>
            <person name="Tong W."/>
            <person name="Li J."/>
            <person name="Tong Z."/>
            <person name="Li S."/>
            <person name="Ye J."/>
            <person name="Wang L."/>
            <person name="Fang L."/>
            <person name="Lei T."/>
            <person name="Chen C.-S."/>
            <person name="Chen H.-C."/>
            <person name="Xu Z."/>
            <person name="Li H."/>
            <person name="Huang H."/>
            <person name="Zhang F."/>
            <person name="Xu H."/>
            <person name="Li N."/>
            <person name="Zhao C."/>
            <person name="Li S."/>
            <person name="Dong L."/>
            <person name="Huang Y."/>
            <person name="Li L."/>
            <person name="Xi Y."/>
            <person name="Qi Q."/>
            <person name="Li W."/>
            <person name="Zhang B."/>
            <person name="Hu W."/>
            <person name="Zhang Y."/>
            <person name="Tian X."/>
            <person name="Jiao Y."/>
            <person name="Liang X."/>
            <person name="Jin J."/>
            <person name="Gao L."/>
            <person name="Zheng W."/>
            <person name="Hao B."/>
            <person name="Liu S.-M."/>
            <person name="Wang W."/>
            <person name="Yuan L."/>
            <person name="Cao M."/>
            <person name="McDermott J."/>
            <person name="Samudrala R."/>
            <person name="Wang J."/>
            <person name="Wong G.K.-S."/>
            <person name="Yang H."/>
        </authorList>
    </citation>
    <scope>NUCLEOTIDE SEQUENCE [LARGE SCALE GENOMIC DNA]</scope>
    <source>
        <strain>cv. 93-11</strain>
    </source>
</reference>
<feature type="chain" id="PRO_0000398350" description="SPX domain-containing protein 3">
    <location>
        <begin position="1"/>
        <end position="277"/>
    </location>
</feature>
<feature type="domain" description="SPX" evidence="1">
    <location>
        <begin position="1"/>
        <end position="152"/>
    </location>
</feature>
<name>SPX3_ORYSI</name>
<organism>
    <name type="scientific">Oryza sativa subsp. indica</name>
    <name type="common">Rice</name>
    <dbReference type="NCBI Taxonomy" id="39946"/>
    <lineage>
        <taxon>Eukaryota</taxon>
        <taxon>Viridiplantae</taxon>
        <taxon>Streptophyta</taxon>
        <taxon>Embryophyta</taxon>
        <taxon>Tracheophyta</taxon>
        <taxon>Spermatophyta</taxon>
        <taxon>Magnoliopsida</taxon>
        <taxon>Liliopsida</taxon>
        <taxon>Poales</taxon>
        <taxon>Poaceae</taxon>
        <taxon>BOP clade</taxon>
        <taxon>Oryzoideae</taxon>
        <taxon>Oryzeae</taxon>
        <taxon>Oryzinae</taxon>
        <taxon>Oryza</taxon>
        <taxon>Oryza sativa</taxon>
    </lineage>
</organism>